<evidence type="ECO:0000250" key="1">
    <source>
        <dbReference type="UniProtKB" id="B7QK46"/>
    </source>
</evidence>
<evidence type="ECO:0000250" key="2">
    <source>
        <dbReference type="UniProtKB" id="Q16769"/>
    </source>
</evidence>
<evidence type="ECO:0000255" key="3"/>
<evidence type="ECO:0000269" key="4">
    <source>
    </source>
</evidence>
<evidence type="ECO:0000269" key="5">
    <source>
    </source>
</evidence>
<evidence type="ECO:0000303" key="6">
    <source>
    </source>
</evidence>
<evidence type="ECO:0000305" key="7"/>
<evidence type="ECO:0007829" key="8">
    <source>
        <dbReference type="PDB" id="3PB6"/>
    </source>
</evidence>
<evidence type="ECO:0007829" key="9">
    <source>
        <dbReference type="PDB" id="3PB9"/>
    </source>
</evidence>
<keyword id="KW-0002">3D-structure</keyword>
<keyword id="KW-0012">Acyltransferase</keyword>
<keyword id="KW-0025">Alternative splicing</keyword>
<keyword id="KW-1015">Disulfide bond</keyword>
<keyword id="KW-0333">Golgi apparatus</keyword>
<keyword id="KW-0472">Membrane</keyword>
<keyword id="KW-0479">Metal-binding</keyword>
<keyword id="KW-1267">Proteomics identification</keyword>
<keyword id="KW-1185">Reference proteome</keyword>
<keyword id="KW-0808">Transferase</keyword>
<keyword id="KW-0812">Transmembrane</keyword>
<keyword id="KW-1133">Transmembrane helix</keyword>
<keyword id="KW-0862">Zinc</keyword>
<protein>
    <recommendedName>
        <fullName>Glutaminyl-peptide cyclotransferase-like protein</fullName>
        <ecNumber>2.3.2.5</ecNumber>
    </recommendedName>
    <alternativeName>
        <fullName>Golgi-resident glutaminyl-peptide cyclotransferase</fullName>
    </alternativeName>
    <alternativeName>
        <fullName>isoQC</fullName>
        <shortName>gQC</shortName>
    </alternativeName>
</protein>
<feature type="chain" id="PRO_0000302002" description="Glutaminyl-peptide cyclotransferase-like protein">
    <location>
        <begin position="1"/>
        <end position="382"/>
    </location>
</feature>
<feature type="transmembrane region" description="Helical" evidence="3">
    <location>
        <begin position="35"/>
        <end position="55"/>
    </location>
</feature>
<feature type="active site" description="Proton acceptor" evidence="2">
    <location>
        <position position="225"/>
    </location>
</feature>
<feature type="active site" description="Proton acceptor" evidence="2">
    <location>
        <position position="269"/>
    </location>
</feature>
<feature type="binding site" evidence="2">
    <location>
        <position position="186"/>
    </location>
    <ligand>
        <name>Zn(2+)</name>
        <dbReference type="ChEBI" id="CHEBI:29105"/>
    </ligand>
</feature>
<feature type="binding site" evidence="2">
    <location>
        <position position="226"/>
    </location>
    <ligand>
        <name>Zn(2+)</name>
        <dbReference type="ChEBI" id="CHEBI:29105"/>
    </ligand>
</feature>
<feature type="binding site" evidence="2">
    <location>
        <position position="351"/>
    </location>
    <ligand>
        <name>Zn(2+)</name>
        <dbReference type="ChEBI" id="CHEBI:29105"/>
    </ligand>
</feature>
<feature type="disulfide bond" evidence="2">
    <location>
        <begin position="167"/>
        <end position="191"/>
    </location>
</feature>
<feature type="splice variant" id="VSP_054066" description="In isoform 2." evidence="6">
    <location>
        <begin position="118"/>
        <end position="211"/>
    </location>
</feature>
<feature type="sequence variant" id="VAR_034937" description="In dbSNP:rs28708996.">
    <original>P</original>
    <variation>L</variation>
    <location>
        <position position="214"/>
    </location>
</feature>
<feature type="sequence conflict" description="In Ref. 2; BAD96356." evidence="7" ref="2">
    <original>I</original>
    <variation>T</variation>
    <location>
        <position position="295"/>
    </location>
</feature>
<feature type="sequence conflict" description="In Ref. 1; BAA90938/BAD18747." evidence="7" ref="1">
    <original>F</original>
    <variation>S</variation>
    <location>
        <position position="321"/>
    </location>
</feature>
<feature type="sequence conflict" description="In Ref. 2; BAD96356." evidence="7" ref="2">
    <original>R</original>
    <variation>G</variation>
    <location>
        <position position="334"/>
    </location>
</feature>
<feature type="helix" evidence="8">
    <location>
        <begin position="78"/>
        <end position="86"/>
    </location>
</feature>
<feature type="helix" evidence="8">
    <location>
        <begin position="90"/>
        <end position="96"/>
    </location>
</feature>
<feature type="helix" evidence="8">
    <location>
        <begin position="99"/>
        <end position="101"/>
    </location>
</feature>
<feature type="helix" evidence="8">
    <location>
        <begin position="110"/>
        <end position="125"/>
    </location>
</feature>
<feature type="strand" evidence="8">
    <location>
        <begin position="131"/>
        <end position="141"/>
    </location>
</feature>
<feature type="strand" evidence="8">
    <location>
        <begin position="144"/>
        <end position="155"/>
    </location>
</feature>
<feature type="strand" evidence="8">
    <location>
        <begin position="159"/>
        <end position="168"/>
    </location>
</feature>
<feature type="strand" evidence="9">
    <location>
        <begin position="176"/>
        <end position="179"/>
    </location>
</feature>
<feature type="turn" evidence="8">
    <location>
        <begin position="184"/>
        <end position="187"/>
    </location>
</feature>
<feature type="helix" evidence="8">
    <location>
        <begin position="188"/>
        <end position="200"/>
    </location>
</feature>
<feature type="helix" evidence="8">
    <location>
        <begin position="202"/>
        <end position="210"/>
    </location>
</feature>
<feature type="strand" evidence="8">
    <location>
        <begin position="214"/>
        <end position="223"/>
    </location>
</feature>
<feature type="strand" evidence="9">
    <location>
        <begin position="228"/>
        <end position="230"/>
    </location>
</feature>
<feature type="helix" evidence="8">
    <location>
        <begin position="238"/>
        <end position="249"/>
    </location>
</feature>
<feature type="strand" evidence="9">
    <location>
        <begin position="253"/>
        <end position="257"/>
    </location>
</feature>
<feature type="turn" evidence="8">
    <location>
        <begin position="258"/>
        <end position="261"/>
    </location>
</feature>
<feature type="strand" evidence="8">
    <location>
        <begin position="262"/>
        <end position="270"/>
    </location>
</feature>
<feature type="strand" evidence="8">
    <location>
        <begin position="272"/>
        <end position="275"/>
    </location>
</feature>
<feature type="helix" evidence="8">
    <location>
        <begin position="283"/>
        <end position="285"/>
    </location>
</feature>
<feature type="helix" evidence="8">
    <location>
        <begin position="286"/>
        <end position="301"/>
    </location>
</feature>
<feature type="strand" evidence="8">
    <location>
        <begin position="313"/>
        <end position="315"/>
    </location>
</feature>
<feature type="helix" evidence="8">
    <location>
        <begin position="329"/>
        <end position="332"/>
    </location>
</feature>
<feature type="turn" evidence="8">
    <location>
        <begin position="333"/>
        <end position="335"/>
    </location>
</feature>
<feature type="strand" evidence="8">
    <location>
        <begin position="338"/>
        <end position="342"/>
    </location>
</feature>
<feature type="turn" evidence="8">
    <location>
        <begin position="348"/>
        <end position="351"/>
    </location>
</feature>
<feature type="helix" evidence="8">
    <location>
        <begin position="357"/>
        <end position="359"/>
    </location>
</feature>
<feature type="helix" evidence="8">
    <location>
        <begin position="362"/>
        <end position="380"/>
    </location>
</feature>
<reference key="1">
    <citation type="journal article" date="2004" name="Nat. Genet.">
        <title>Complete sequencing and characterization of 21,243 full-length human cDNAs.</title>
        <authorList>
            <person name="Ota T."/>
            <person name="Suzuki Y."/>
            <person name="Nishikawa T."/>
            <person name="Otsuki T."/>
            <person name="Sugiyama T."/>
            <person name="Irie R."/>
            <person name="Wakamatsu A."/>
            <person name="Hayashi K."/>
            <person name="Sato H."/>
            <person name="Nagai K."/>
            <person name="Kimura K."/>
            <person name="Makita H."/>
            <person name="Sekine M."/>
            <person name="Obayashi M."/>
            <person name="Nishi T."/>
            <person name="Shibahara T."/>
            <person name="Tanaka T."/>
            <person name="Ishii S."/>
            <person name="Yamamoto J."/>
            <person name="Saito K."/>
            <person name="Kawai Y."/>
            <person name="Isono Y."/>
            <person name="Nakamura Y."/>
            <person name="Nagahari K."/>
            <person name="Murakami K."/>
            <person name="Yasuda T."/>
            <person name="Iwayanagi T."/>
            <person name="Wagatsuma M."/>
            <person name="Shiratori A."/>
            <person name="Sudo H."/>
            <person name="Hosoiri T."/>
            <person name="Kaku Y."/>
            <person name="Kodaira H."/>
            <person name="Kondo H."/>
            <person name="Sugawara M."/>
            <person name="Takahashi M."/>
            <person name="Kanda K."/>
            <person name="Yokoi T."/>
            <person name="Furuya T."/>
            <person name="Kikkawa E."/>
            <person name="Omura Y."/>
            <person name="Abe K."/>
            <person name="Kamihara K."/>
            <person name="Katsuta N."/>
            <person name="Sato K."/>
            <person name="Tanikawa M."/>
            <person name="Yamazaki M."/>
            <person name="Ninomiya K."/>
            <person name="Ishibashi T."/>
            <person name="Yamashita H."/>
            <person name="Murakawa K."/>
            <person name="Fujimori K."/>
            <person name="Tanai H."/>
            <person name="Kimata M."/>
            <person name="Watanabe M."/>
            <person name="Hiraoka S."/>
            <person name="Chiba Y."/>
            <person name="Ishida S."/>
            <person name="Ono Y."/>
            <person name="Takiguchi S."/>
            <person name="Watanabe S."/>
            <person name="Yosida M."/>
            <person name="Hotuta T."/>
            <person name="Kusano J."/>
            <person name="Kanehori K."/>
            <person name="Takahashi-Fujii A."/>
            <person name="Hara H."/>
            <person name="Tanase T.-O."/>
            <person name="Nomura Y."/>
            <person name="Togiya S."/>
            <person name="Komai F."/>
            <person name="Hara R."/>
            <person name="Takeuchi K."/>
            <person name="Arita M."/>
            <person name="Imose N."/>
            <person name="Musashino K."/>
            <person name="Yuuki H."/>
            <person name="Oshima A."/>
            <person name="Sasaki N."/>
            <person name="Aotsuka S."/>
            <person name="Yoshikawa Y."/>
            <person name="Matsunawa H."/>
            <person name="Ichihara T."/>
            <person name="Shiohata N."/>
            <person name="Sano S."/>
            <person name="Moriya S."/>
            <person name="Momiyama H."/>
            <person name="Satoh N."/>
            <person name="Takami S."/>
            <person name="Terashima Y."/>
            <person name="Suzuki O."/>
            <person name="Nakagawa S."/>
            <person name="Senoh A."/>
            <person name="Mizoguchi H."/>
            <person name="Goto Y."/>
            <person name="Shimizu F."/>
            <person name="Wakebe H."/>
            <person name="Hishigaki H."/>
            <person name="Watanabe T."/>
            <person name="Sugiyama A."/>
            <person name="Takemoto M."/>
            <person name="Kawakami B."/>
            <person name="Yamazaki M."/>
            <person name="Watanabe K."/>
            <person name="Kumagai A."/>
            <person name="Itakura S."/>
            <person name="Fukuzumi Y."/>
            <person name="Fujimori Y."/>
            <person name="Komiyama M."/>
            <person name="Tashiro H."/>
            <person name="Tanigami A."/>
            <person name="Fujiwara T."/>
            <person name="Ono T."/>
            <person name="Yamada K."/>
            <person name="Fujii Y."/>
            <person name="Ozaki K."/>
            <person name="Hirao M."/>
            <person name="Ohmori Y."/>
            <person name="Kawabata A."/>
            <person name="Hikiji T."/>
            <person name="Kobatake N."/>
            <person name="Inagaki H."/>
            <person name="Ikema Y."/>
            <person name="Okamoto S."/>
            <person name="Okitani R."/>
            <person name="Kawakami T."/>
            <person name="Noguchi S."/>
            <person name="Itoh T."/>
            <person name="Shigeta K."/>
            <person name="Senba T."/>
            <person name="Matsumura K."/>
            <person name="Nakajima Y."/>
            <person name="Mizuno T."/>
            <person name="Morinaga M."/>
            <person name="Sasaki M."/>
            <person name="Togashi T."/>
            <person name="Oyama M."/>
            <person name="Hata H."/>
            <person name="Watanabe M."/>
            <person name="Komatsu T."/>
            <person name="Mizushima-Sugano J."/>
            <person name="Satoh T."/>
            <person name="Shirai Y."/>
            <person name="Takahashi Y."/>
            <person name="Nakagawa K."/>
            <person name="Okumura K."/>
            <person name="Nagase T."/>
            <person name="Nomura N."/>
            <person name="Kikuchi H."/>
            <person name="Masuho Y."/>
            <person name="Yamashita R."/>
            <person name="Nakai K."/>
            <person name="Yada T."/>
            <person name="Nakamura Y."/>
            <person name="Ohara O."/>
            <person name="Isogai T."/>
            <person name="Sugano S."/>
        </authorList>
    </citation>
    <scope>NUCLEOTIDE SEQUENCE [LARGE SCALE MRNA] (ISOFORM 1)</scope>
    <source>
        <tissue>Colon</tissue>
    </source>
</reference>
<reference key="2">
    <citation type="submission" date="2005-04" db="EMBL/GenBank/DDBJ databases">
        <authorList>
            <person name="Suzuki Y."/>
            <person name="Sugano S."/>
            <person name="Totoki Y."/>
            <person name="Toyoda A."/>
            <person name="Takeda T."/>
            <person name="Sakaki Y."/>
            <person name="Tanaka A."/>
            <person name="Yokoyama S."/>
        </authorList>
    </citation>
    <scope>NUCLEOTIDE SEQUENCE [LARGE SCALE MRNA] (ISOFORM 1)</scope>
    <source>
        <tissue>Cerebellum</tissue>
    </source>
</reference>
<reference key="3">
    <citation type="journal article" date="2004" name="Nature">
        <title>The DNA sequence and biology of human chromosome 19.</title>
        <authorList>
            <person name="Grimwood J."/>
            <person name="Gordon L.A."/>
            <person name="Olsen A.S."/>
            <person name="Terry A."/>
            <person name="Schmutz J."/>
            <person name="Lamerdin J.E."/>
            <person name="Hellsten U."/>
            <person name="Goodstein D."/>
            <person name="Couronne O."/>
            <person name="Tran-Gyamfi M."/>
            <person name="Aerts A."/>
            <person name="Altherr M."/>
            <person name="Ashworth L."/>
            <person name="Bajorek E."/>
            <person name="Black S."/>
            <person name="Branscomb E."/>
            <person name="Caenepeel S."/>
            <person name="Carrano A.V."/>
            <person name="Caoile C."/>
            <person name="Chan Y.M."/>
            <person name="Christensen M."/>
            <person name="Cleland C.A."/>
            <person name="Copeland A."/>
            <person name="Dalin E."/>
            <person name="Dehal P."/>
            <person name="Denys M."/>
            <person name="Detter J.C."/>
            <person name="Escobar J."/>
            <person name="Flowers D."/>
            <person name="Fotopulos D."/>
            <person name="Garcia C."/>
            <person name="Georgescu A.M."/>
            <person name="Glavina T."/>
            <person name="Gomez M."/>
            <person name="Gonzales E."/>
            <person name="Groza M."/>
            <person name="Hammon N."/>
            <person name="Hawkins T."/>
            <person name="Haydu L."/>
            <person name="Ho I."/>
            <person name="Huang W."/>
            <person name="Israni S."/>
            <person name="Jett J."/>
            <person name="Kadner K."/>
            <person name="Kimball H."/>
            <person name="Kobayashi A."/>
            <person name="Larionov V."/>
            <person name="Leem S.-H."/>
            <person name="Lopez F."/>
            <person name="Lou Y."/>
            <person name="Lowry S."/>
            <person name="Malfatti S."/>
            <person name="Martinez D."/>
            <person name="McCready P.M."/>
            <person name="Medina C."/>
            <person name="Morgan J."/>
            <person name="Nelson K."/>
            <person name="Nolan M."/>
            <person name="Ovcharenko I."/>
            <person name="Pitluck S."/>
            <person name="Pollard M."/>
            <person name="Popkie A.P."/>
            <person name="Predki P."/>
            <person name="Quan G."/>
            <person name="Ramirez L."/>
            <person name="Rash S."/>
            <person name="Retterer J."/>
            <person name="Rodriguez A."/>
            <person name="Rogers S."/>
            <person name="Salamov A."/>
            <person name="Salazar A."/>
            <person name="She X."/>
            <person name="Smith D."/>
            <person name="Slezak T."/>
            <person name="Solovyev V."/>
            <person name="Thayer N."/>
            <person name="Tice H."/>
            <person name="Tsai M."/>
            <person name="Ustaszewska A."/>
            <person name="Vo N."/>
            <person name="Wagner M."/>
            <person name="Wheeler J."/>
            <person name="Wu K."/>
            <person name="Xie G."/>
            <person name="Yang J."/>
            <person name="Dubchak I."/>
            <person name="Furey T.S."/>
            <person name="DeJong P."/>
            <person name="Dickson M."/>
            <person name="Gordon D."/>
            <person name="Eichler E.E."/>
            <person name="Pennacchio L.A."/>
            <person name="Richardson P."/>
            <person name="Stubbs L."/>
            <person name="Rokhsar D.S."/>
            <person name="Myers R.M."/>
            <person name="Rubin E.M."/>
            <person name="Lucas S.M."/>
        </authorList>
    </citation>
    <scope>NUCLEOTIDE SEQUENCE [LARGE SCALE GENOMIC DNA]</scope>
</reference>
<reference key="4">
    <citation type="journal article" date="2004" name="Genome Res.">
        <title>The status, quality, and expansion of the NIH full-length cDNA project: the Mammalian Gene Collection (MGC).</title>
        <authorList>
            <consortium name="The MGC Project Team"/>
        </authorList>
    </citation>
    <scope>NUCLEOTIDE SEQUENCE [LARGE SCALE MRNA] (ISOFORM 2)</scope>
    <source>
        <tissue>Kidney</tissue>
    </source>
</reference>
<reference key="5">
    <citation type="journal article" date="2008" name="J. Mol. Biol.">
        <title>Isolation of an isoenzyme of human glutaminyl cyclase: retention in the Golgi complex suggests involvement in the protein maturation machinery.</title>
        <authorList>
            <person name="Cynis H."/>
            <person name="Rahfeld J.U."/>
            <person name="Stephan A."/>
            <person name="Kehlen A."/>
            <person name="Koch B."/>
            <person name="Wermann M."/>
            <person name="Demuth H.U."/>
            <person name="Schilling S."/>
        </authorList>
    </citation>
    <scope>FUNCTION</scope>
    <scope>CATALYTIC ACTIVITY</scope>
    <scope>SUBCELLULAR LOCATION</scope>
</reference>
<reference key="6">
    <citation type="journal article" date="2011" name="BMC Syst. Biol.">
        <title>Initial characterization of the human central proteome.</title>
        <authorList>
            <person name="Burkard T.R."/>
            <person name="Planyavsky M."/>
            <person name="Kaupe I."/>
            <person name="Breitwieser F.P."/>
            <person name="Buerckstuemmer T."/>
            <person name="Bennett K.L."/>
            <person name="Superti-Furga G."/>
            <person name="Colinge J."/>
        </authorList>
    </citation>
    <scope>IDENTIFICATION BY MASS SPECTROMETRY [LARGE SCALE ANALYSIS]</scope>
</reference>
<reference key="7">
    <citation type="journal article" date="2015" name="Proteomics">
        <title>N-terminome analysis of the human mitochondrial proteome.</title>
        <authorList>
            <person name="Vaca Jacome A.S."/>
            <person name="Rabilloud T."/>
            <person name="Schaeffer-Reiss C."/>
            <person name="Rompais M."/>
            <person name="Ayoub D."/>
            <person name="Lane L."/>
            <person name="Bairoch A."/>
            <person name="Van Dorsselaer A."/>
            <person name="Carapito C."/>
        </authorList>
    </citation>
    <scope>IDENTIFICATION BY MASS SPECTROMETRY [LARGE SCALE ANALYSIS]</scope>
</reference>
<reference key="8">
    <citation type="journal article" date="2011" name="J. Biol. Chem.">
        <title>Structures of human Golgi-resident glutaminyl cyclase and its complexes with inhibitors reveal a large loop movement upon inhibitor binding.</title>
        <authorList>
            <person name="Huang K.F."/>
            <person name="Liaw S.S."/>
            <person name="Huang W.L."/>
            <person name="Chia C.Y."/>
            <person name="Lo Y.C."/>
            <person name="Chen Y.L."/>
            <person name="Wang A.H."/>
        </authorList>
    </citation>
    <scope>X-RAY CRYSTALLOGRAPHY (1.05 ANGSTROMS) OF 53-382 IN COMPLEXES WITH SYNTHETIC INHIBITORS PBD150 AND ZINC IONS</scope>
    <scope>FUNCTION</scope>
    <scope>CATALYTIC ACTIVITY</scope>
</reference>
<comment type="function">
    <text evidence="4 5">Responsible for the biosynthesis of pyroglutamyl peptides.</text>
</comment>
<comment type="catalytic activity">
    <reaction evidence="4 5">
        <text>N-terminal L-glutaminyl-[peptide] = N-terminal 5-oxo-L-prolyl-[peptide] + NH4(+)</text>
        <dbReference type="Rhea" id="RHEA:23652"/>
        <dbReference type="Rhea" id="RHEA-COMP:11736"/>
        <dbReference type="Rhea" id="RHEA-COMP:11846"/>
        <dbReference type="ChEBI" id="CHEBI:28938"/>
        <dbReference type="ChEBI" id="CHEBI:64722"/>
        <dbReference type="ChEBI" id="CHEBI:87215"/>
        <dbReference type="EC" id="2.3.2.5"/>
    </reaction>
</comment>
<comment type="interaction">
    <interactant intactId="EBI-13336719">
        <id>Q9NXS2-3</id>
    </interactant>
    <interactant intactId="EBI-2804156">
        <id>Q6UX06</id>
        <label>OLFM4</label>
    </interactant>
    <organismsDiffer>false</organismsDiffer>
    <experiments>3</experiments>
</comment>
<comment type="interaction">
    <interactant intactId="EBI-13336719">
        <id>Q9NXS2-3</id>
    </interactant>
    <interactant intactId="EBI-10243654">
        <id>Q5BVD1</id>
        <label>TTMP</label>
    </interactant>
    <organismsDiffer>false</organismsDiffer>
    <experiments>3</experiments>
</comment>
<comment type="subcellular location">
    <subcellularLocation>
        <location evidence="4">Golgi apparatus membrane</location>
        <topology evidence="4">Single-pass type I membrane protein</topology>
    </subcellularLocation>
</comment>
<comment type="alternative products">
    <event type="alternative splicing"/>
    <isoform>
        <id>Q9NXS2-1</id>
        <name>1</name>
        <sequence type="displayed"/>
    </isoform>
    <isoform>
        <id>Q9NXS2-3</id>
        <name>2</name>
        <sequence type="described" ref="VSP_054066"/>
    </isoform>
</comment>
<comment type="similarity">
    <text evidence="7">Belongs to the glutaminyl-peptide cyclotransferase family.</text>
</comment>
<comment type="caution">
    <text evidence="1 5">It is unclear whether this protein requires a metal cofactor for catalysis. It was originally proposed to be a Zn(2+)-dependent metalloenzyme based on structural similarities to bacterial aminopeptidases and the observation that it can bind Zn(2+) ions, typically in a 1:1 stoichiometry (PubMed:21288892). However, a recent study suggests a Zn(2+)-independent catalytic mechanism (By similarity).</text>
</comment>
<proteinExistence type="evidence at protein level"/>
<dbReference type="EC" id="2.3.2.5"/>
<dbReference type="EMBL" id="AK000091">
    <property type="protein sequence ID" value="BAA90938.1"/>
    <property type="molecule type" value="mRNA"/>
</dbReference>
<dbReference type="EMBL" id="AK172764">
    <property type="protein sequence ID" value="BAD18747.1"/>
    <property type="molecule type" value="mRNA"/>
</dbReference>
<dbReference type="EMBL" id="AK222636">
    <property type="protein sequence ID" value="BAD96356.1"/>
    <property type="molecule type" value="mRNA"/>
</dbReference>
<dbReference type="EMBL" id="AC007191">
    <property type="status" value="NOT_ANNOTATED_CDS"/>
    <property type="molecule type" value="Genomic_DNA"/>
</dbReference>
<dbReference type="EMBL" id="BC011553">
    <property type="protein sequence ID" value="AAH11553.1"/>
    <property type="molecule type" value="mRNA"/>
</dbReference>
<dbReference type="CCDS" id="CCDS12672.1">
    <molecule id="Q9NXS2-1"/>
</dbReference>
<dbReference type="CCDS" id="CCDS54282.1">
    <molecule id="Q9NXS2-3"/>
</dbReference>
<dbReference type="RefSeq" id="NP_001156849.1">
    <molecule id="Q9NXS2-3"/>
    <property type="nucleotide sequence ID" value="NM_001163377.2"/>
</dbReference>
<dbReference type="RefSeq" id="NP_060129.2">
    <molecule id="Q9NXS2-1"/>
    <property type="nucleotide sequence ID" value="NM_017659.4"/>
</dbReference>
<dbReference type="PDB" id="3PB4">
    <property type="method" value="X-ray"/>
    <property type="resolution" value="1.13 A"/>
    <property type="chains" value="X=53-382"/>
</dbReference>
<dbReference type="PDB" id="3PB6">
    <property type="method" value="X-ray"/>
    <property type="resolution" value="1.05 A"/>
    <property type="chains" value="X=53-382"/>
</dbReference>
<dbReference type="PDB" id="3PB7">
    <property type="method" value="X-ray"/>
    <property type="resolution" value="1.40 A"/>
    <property type="chains" value="X=53-382"/>
</dbReference>
<dbReference type="PDB" id="3PB8">
    <property type="method" value="X-ray"/>
    <property type="resolution" value="1.13 A"/>
    <property type="chains" value="X=53-382"/>
</dbReference>
<dbReference type="PDB" id="3PB9">
    <property type="method" value="X-ray"/>
    <property type="resolution" value="1.12 A"/>
    <property type="chains" value="X=53-382"/>
</dbReference>
<dbReference type="PDB" id="8XFV">
    <property type="method" value="X-ray"/>
    <property type="resolution" value="3.13 A"/>
    <property type="chains" value="A/B/C/D/E/F/G/H/I/J/X=70-382"/>
</dbReference>
<dbReference type="PDB" id="8XGA">
    <property type="method" value="X-ray"/>
    <property type="resolution" value="3.54 A"/>
    <property type="chains" value="A/B/C/D/E/F/G/H/I/J/K=70-382"/>
</dbReference>
<dbReference type="PDBsum" id="3PB4"/>
<dbReference type="PDBsum" id="3PB6"/>
<dbReference type="PDBsum" id="3PB7"/>
<dbReference type="PDBsum" id="3PB8"/>
<dbReference type="PDBsum" id="3PB9"/>
<dbReference type="PDBsum" id="8XFV"/>
<dbReference type="PDBsum" id="8XGA"/>
<dbReference type="SMR" id="Q9NXS2"/>
<dbReference type="BioGRID" id="120171">
    <property type="interactions" value="92"/>
</dbReference>
<dbReference type="FunCoup" id="Q9NXS2">
    <property type="interactions" value="1490"/>
</dbReference>
<dbReference type="IntAct" id="Q9NXS2">
    <property type="interactions" value="48"/>
</dbReference>
<dbReference type="MINT" id="Q9NXS2"/>
<dbReference type="STRING" id="9606.ENSP00000012049"/>
<dbReference type="BindingDB" id="Q9NXS2"/>
<dbReference type="ChEMBL" id="CHEMBL3638349"/>
<dbReference type="GuidetoPHARMACOLOGY" id="3289"/>
<dbReference type="MEROPS" id="M28.016"/>
<dbReference type="iPTMnet" id="Q9NXS2"/>
<dbReference type="PhosphoSitePlus" id="Q9NXS2"/>
<dbReference type="BioMuta" id="QPCTL"/>
<dbReference type="DMDM" id="296452875"/>
<dbReference type="jPOST" id="Q9NXS2"/>
<dbReference type="MassIVE" id="Q9NXS2"/>
<dbReference type="PaxDb" id="9606-ENSP00000012049"/>
<dbReference type="PeptideAtlas" id="Q9NXS2"/>
<dbReference type="ProteomicsDB" id="83131">
    <molecule id="Q9NXS2-1"/>
</dbReference>
<dbReference type="Pumba" id="Q9NXS2"/>
<dbReference type="Antibodypedia" id="31379">
    <property type="antibodies" value="109 antibodies from 18 providers"/>
</dbReference>
<dbReference type="DNASU" id="54814"/>
<dbReference type="Ensembl" id="ENST00000012049.10">
    <molecule id="Q9NXS2-1"/>
    <property type="protein sequence ID" value="ENSP00000012049.4"/>
    <property type="gene ID" value="ENSG00000011478.13"/>
</dbReference>
<dbReference type="Ensembl" id="ENST00000366382.8">
    <molecule id="Q9NXS2-3"/>
    <property type="protein sequence ID" value="ENSP00000387944.2"/>
    <property type="gene ID" value="ENSG00000011478.13"/>
</dbReference>
<dbReference type="GeneID" id="54814"/>
<dbReference type="KEGG" id="hsa:54814"/>
<dbReference type="MANE-Select" id="ENST00000012049.10">
    <property type="protein sequence ID" value="ENSP00000012049.4"/>
    <property type="RefSeq nucleotide sequence ID" value="NM_017659.4"/>
    <property type="RefSeq protein sequence ID" value="NP_060129.2"/>
</dbReference>
<dbReference type="UCSC" id="uc010ekn.4">
    <molecule id="Q9NXS2-1"/>
    <property type="organism name" value="human"/>
</dbReference>
<dbReference type="AGR" id="HGNC:25952"/>
<dbReference type="CTD" id="54814"/>
<dbReference type="DisGeNET" id="54814"/>
<dbReference type="GeneCards" id="QPCTL"/>
<dbReference type="HGNC" id="HGNC:25952">
    <property type="gene designation" value="QPCTL"/>
</dbReference>
<dbReference type="HPA" id="ENSG00000011478">
    <property type="expression patterns" value="Low tissue specificity"/>
</dbReference>
<dbReference type="neXtProt" id="NX_Q9NXS2"/>
<dbReference type="OpenTargets" id="ENSG00000011478"/>
<dbReference type="PharmGKB" id="PA134922163"/>
<dbReference type="VEuPathDB" id="HostDB:ENSG00000011478"/>
<dbReference type="eggNOG" id="KOG3946">
    <property type="taxonomic scope" value="Eukaryota"/>
</dbReference>
<dbReference type="GeneTree" id="ENSGT00390000003107"/>
<dbReference type="HOGENOM" id="CLU_045003_3_0_1"/>
<dbReference type="InParanoid" id="Q9NXS2"/>
<dbReference type="OMA" id="CAHWDSR"/>
<dbReference type="OrthoDB" id="3907302at2759"/>
<dbReference type="PAN-GO" id="Q9NXS2">
    <property type="GO annotations" value="3 GO annotations based on evolutionary models"/>
</dbReference>
<dbReference type="PhylomeDB" id="Q9NXS2"/>
<dbReference type="TreeFam" id="TF315071"/>
<dbReference type="BRENDA" id="2.3.2.5">
    <property type="organism ID" value="2681"/>
</dbReference>
<dbReference type="PathwayCommons" id="Q9NXS2"/>
<dbReference type="SignaLink" id="Q9NXS2"/>
<dbReference type="BioGRID-ORCS" id="54814">
    <property type="hits" value="15 hits in 1151 CRISPR screens"/>
</dbReference>
<dbReference type="ChiTaRS" id="QPCTL">
    <property type="organism name" value="human"/>
</dbReference>
<dbReference type="EvolutionaryTrace" id="Q9NXS2"/>
<dbReference type="GenomeRNAi" id="54814"/>
<dbReference type="Pharos" id="Q9NXS2">
    <property type="development level" value="Tchem"/>
</dbReference>
<dbReference type="PRO" id="PR:Q9NXS2"/>
<dbReference type="Proteomes" id="UP000005640">
    <property type="component" value="Chromosome 19"/>
</dbReference>
<dbReference type="RNAct" id="Q9NXS2">
    <property type="molecule type" value="protein"/>
</dbReference>
<dbReference type="Bgee" id="ENSG00000011478">
    <property type="expression patterns" value="Expressed in stromal cell of endometrium and 92 other cell types or tissues"/>
</dbReference>
<dbReference type="ExpressionAtlas" id="Q9NXS2">
    <property type="expression patterns" value="baseline and differential"/>
</dbReference>
<dbReference type="GO" id="GO:0005794">
    <property type="term" value="C:Golgi apparatus"/>
    <property type="evidence" value="ECO:0000314"/>
    <property type="project" value="HPA"/>
</dbReference>
<dbReference type="GO" id="GO:0000139">
    <property type="term" value="C:Golgi membrane"/>
    <property type="evidence" value="ECO:0007669"/>
    <property type="project" value="UniProtKB-SubCell"/>
</dbReference>
<dbReference type="GO" id="GO:0016020">
    <property type="term" value="C:membrane"/>
    <property type="evidence" value="ECO:0007005"/>
    <property type="project" value="UniProtKB"/>
</dbReference>
<dbReference type="GO" id="GO:0016603">
    <property type="term" value="F:glutaminyl-peptide cyclotransferase activity"/>
    <property type="evidence" value="ECO:0000314"/>
    <property type="project" value="UniProtKB"/>
</dbReference>
<dbReference type="GO" id="GO:0008270">
    <property type="term" value="F:zinc ion binding"/>
    <property type="evidence" value="ECO:0000314"/>
    <property type="project" value="UniProtKB"/>
</dbReference>
<dbReference type="GO" id="GO:0017186">
    <property type="term" value="P:peptidyl-pyroglutamic acid biosynthetic process, using glutaminyl-peptide cyclotransferase"/>
    <property type="evidence" value="ECO:0000314"/>
    <property type="project" value="UniProtKB"/>
</dbReference>
<dbReference type="CDD" id="cd03880">
    <property type="entry name" value="M28_QC_like"/>
    <property type="match status" value="1"/>
</dbReference>
<dbReference type="FunFam" id="3.40.630.10:FF:000053">
    <property type="entry name" value="glutaminyl-peptide cyclotransferase-like protein"/>
    <property type="match status" value="1"/>
</dbReference>
<dbReference type="Gene3D" id="3.40.630.10">
    <property type="entry name" value="Zn peptidases"/>
    <property type="match status" value="1"/>
</dbReference>
<dbReference type="InterPro" id="IPR037457">
    <property type="entry name" value="M28_QC"/>
</dbReference>
<dbReference type="InterPro" id="IPR007484">
    <property type="entry name" value="Peptidase_M28"/>
</dbReference>
<dbReference type="InterPro" id="IPR040234">
    <property type="entry name" value="QC/QCL"/>
</dbReference>
<dbReference type="PANTHER" id="PTHR12283">
    <property type="entry name" value="GLUTAMINYL-PEPTIDE CYCLOTRANSFERASE"/>
    <property type="match status" value="1"/>
</dbReference>
<dbReference type="PANTHER" id="PTHR12283:SF3">
    <property type="entry name" value="GLUTAMINYL-PEPTIDE CYCLOTRANSFERASE-LIKE PROTEIN"/>
    <property type="match status" value="1"/>
</dbReference>
<dbReference type="Pfam" id="PF04389">
    <property type="entry name" value="Peptidase_M28"/>
    <property type="match status" value="1"/>
</dbReference>
<dbReference type="SUPFAM" id="SSF53187">
    <property type="entry name" value="Zn-dependent exopeptidases"/>
    <property type="match status" value="1"/>
</dbReference>
<name>QPCTL_HUMAN</name>
<accession>Q9NXS2</accession>
<accession>Q53HE4</accession>
<accession>Q96F74</accession>
<gene>
    <name type="primary">QPCTL</name>
</gene>
<organism>
    <name type="scientific">Homo sapiens</name>
    <name type="common">Human</name>
    <dbReference type="NCBI Taxonomy" id="9606"/>
    <lineage>
        <taxon>Eukaryota</taxon>
        <taxon>Metazoa</taxon>
        <taxon>Chordata</taxon>
        <taxon>Craniata</taxon>
        <taxon>Vertebrata</taxon>
        <taxon>Euteleostomi</taxon>
        <taxon>Mammalia</taxon>
        <taxon>Eutheria</taxon>
        <taxon>Euarchontoglires</taxon>
        <taxon>Primates</taxon>
        <taxon>Haplorrhini</taxon>
        <taxon>Catarrhini</taxon>
        <taxon>Hominidae</taxon>
        <taxon>Homo</taxon>
    </lineage>
</organism>
<sequence>MRSGGRGRPRLRLGERGLMEPLLPPKRRLLPRVRLLPLLLALAVGSAFYTIWSGWHRRTEELPLGRELRVPLIGSLPEARLRRVVGQLDPQRLWSTYLRPLLVVRTPGSPGNLQVRKFLEATLRSLTAGWHVELDPFTASTPLGPVDFGNVVATLDPRAARHLTLACHYDSKLFPPGSTPFVGATDSAVPCALLLELAQALDLELSRAKKQAAPVTLQLLFLDGEEALKEWGPKDSLYGSRHLAQLMESIPHSPGPTRIQAIELFMLLDLLGAPNPTFYSHFPRTVRWFHRLRSIEKRLHRLNLLQSHPQEVMYFQPGEPFGSVEDDHIPFLRRGVPVLHLISTPFPAVWHTPADTEVNLHPPTVHNLCRILAVFLAEYLGL</sequence>